<dbReference type="EMBL" id="CP000482">
    <property type="protein sequence ID" value="ABK98307.1"/>
    <property type="molecule type" value="Genomic_DNA"/>
</dbReference>
<dbReference type="RefSeq" id="WP_011734620.1">
    <property type="nucleotide sequence ID" value="NC_008609.1"/>
</dbReference>
<dbReference type="SMR" id="A1ALT7"/>
<dbReference type="STRING" id="338966.Ppro_0676"/>
<dbReference type="KEGG" id="ppd:Ppro_0676"/>
<dbReference type="eggNOG" id="COG0049">
    <property type="taxonomic scope" value="Bacteria"/>
</dbReference>
<dbReference type="HOGENOM" id="CLU_072226_1_1_7"/>
<dbReference type="OrthoDB" id="9807653at2"/>
<dbReference type="Proteomes" id="UP000006732">
    <property type="component" value="Chromosome"/>
</dbReference>
<dbReference type="GO" id="GO:0015935">
    <property type="term" value="C:small ribosomal subunit"/>
    <property type="evidence" value="ECO:0007669"/>
    <property type="project" value="InterPro"/>
</dbReference>
<dbReference type="GO" id="GO:0019843">
    <property type="term" value="F:rRNA binding"/>
    <property type="evidence" value="ECO:0007669"/>
    <property type="project" value="UniProtKB-UniRule"/>
</dbReference>
<dbReference type="GO" id="GO:0003735">
    <property type="term" value="F:structural constituent of ribosome"/>
    <property type="evidence" value="ECO:0007669"/>
    <property type="project" value="InterPro"/>
</dbReference>
<dbReference type="GO" id="GO:0000049">
    <property type="term" value="F:tRNA binding"/>
    <property type="evidence" value="ECO:0007669"/>
    <property type="project" value="UniProtKB-UniRule"/>
</dbReference>
<dbReference type="GO" id="GO:0006412">
    <property type="term" value="P:translation"/>
    <property type="evidence" value="ECO:0007669"/>
    <property type="project" value="UniProtKB-UniRule"/>
</dbReference>
<dbReference type="CDD" id="cd14869">
    <property type="entry name" value="uS7_Bacteria"/>
    <property type="match status" value="1"/>
</dbReference>
<dbReference type="FunFam" id="1.10.455.10:FF:000001">
    <property type="entry name" value="30S ribosomal protein S7"/>
    <property type="match status" value="1"/>
</dbReference>
<dbReference type="Gene3D" id="1.10.455.10">
    <property type="entry name" value="Ribosomal protein S7 domain"/>
    <property type="match status" value="1"/>
</dbReference>
<dbReference type="HAMAP" id="MF_00480_B">
    <property type="entry name" value="Ribosomal_uS7_B"/>
    <property type="match status" value="1"/>
</dbReference>
<dbReference type="InterPro" id="IPR000235">
    <property type="entry name" value="Ribosomal_uS7"/>
</dbReference>
<dbReference type="InterPro" id="IPR005717">
    <property type="entry name" value="Ribosomal_uS7_bac/org-type"/>
</dbReference>
<dbReference type="InterPro" id="IPR020606">
    <property type="entry name" value="Ribosomal_uS7_CS"/>
</dbReference>
<dbReference type="InterPro" id="IPR023798">
    <property type="entry name" value="Ribosomal_uS7_dom"/>
</dbReference>
<dbReference type="InterPro" id="IPR036823">
    <property type="entry name" value="Ribosomal_uS7_dom_sf"/>
</dbReference>
<dbReference type="NCBIfam" id="TIGR01029">
    <property type="entry name" value="rpsG_bact"/>
    <property type="match status" value="1"/>
</dbReference>
<dbReference type="PANTHER" id="PTHR11205">
    <property type="entry name" value="RIBOSOMAL PROTEIN S7"/>
    <property type="match status" value="1"/>
</dbReference>
<dbReference type="Pfam" id="PF00177">
    <property type="entry name" value="Ribosomal_S7"/>
    <property type="match status" value="1"/>
</dbReference>
<dbReference type="PIRSF" id="PIRSF002122">
    <property type="entry name" value="RPS7p_RPS7a_RPS5e_RPS7o"/>
    <property type="match status" value="1"/>
</dbReference>
<dbReference type="SUPFAM" id="SSF47973">
    <property type="entry name" value="Ribosomal protein S7"/>
    <property type="match status" value="1"/>
</dbReference>
<dbReference type="PROSITE" id="PS00052">
    <property type="entry name" value="RIBOSOMAL_S7"/>
    <property type="match status" value="1"/>
</dbReference>
<protein>
    <recommendedName>
        <fullName evidence="1">Small ribosomal subunit protein uS7</fullName>
    </recommendedName>
    <alternativeName>
        <fullName evidence="2">30S ribosomal protein S7</fullName>
    </alternativeName>
</protein>
<organism>
    <name type="scientific">Pelobacter propionicus (strain DSM 2379 / NBRC 103807 / OttBd1)</name>
    <dbReference type="NCBI Taxonomy" id="338966"/>
    <lineage>
        <taxon>Bacteria</taxon>
        <taxon>Pseudomonadati</taxon>
        <taxon>Thermodesulfobacteriota</taxon>
        <taxon>Desulfuromonadia</taxon>
        <taxon>Desulfuromonadales</taxon>
        <taxon>Desulfuromonadaceae</taxon>
        <taxon>Pelobacter</taxon>
    </lineage>
</organism>
<gene>
    <name evidence="1" type="primary">rpsG</name>
    <name type="ordered locus">Ppro_0676</name>
</gene>
<reference key="1">
    <citation type="submission" date="2006-10" db="EMBL/GenBank/DDBJ databases">
        <title>Complete sequence of chromosome of Pelobacter propionicus DSM 2379.</title>
        <authorList>
            <consortium name="US DOE Joint Genome Institute"/>
            <person name="Copeland A."/>
            <person name="Lucas S."/>
            <person name="Lapidus A."/>
            <person name="Barry K."/>
            <person name="Detter J.C."/>
            <person name="Glavina del Rio T."/>
            <person name="Hammon N."/>
            <person name="Israni S."/>
            <person name="Dalin E."/>
            <person name="Tice H."/>
            <person name="Pitluck S."/>
            <person name="Saunders E."/>
            <person name="Brettin T."/>
            <person name="Bruce D."/>
            <person name="Han C."/>
            <person name="Tapia R."/>
            <person name="Schmutz J."/>
            <person name="Larimer F."/>
            <person name="Land M."/>
            <person name="Hauser L."/>
            <person name="Kyrpides N."/>
            <person name="Kim E."/>
            <person name="Lovley D."/>
            <person name="Richardson P."/>
        </authorList>
    </citation>
    <scope>NUCLEOTIDE SEQUENCE [LARGE SCALE GENOMIC DNA]</scope>
    <source>
        <strain>DSM 2379 / NBRC 103807 / OttBd1</strain>
    </source>
</reference>
<comment type="function">
    <text evidence="1">One of the primary rRNA binding proteins, it binds directly to 16S rRNA where it nucleates assembly of the head domain of the 30S subunit. Is located at the subunit interface close to the decoding center, probably blocks exit of the E-site tRNA.</text>
</comment>
<comment type="subunit">
    <text evidence="1">Part of the 30S ribosomal subunit. Contacts proteins S9 and S11.</text>
</comment>
<comment type="similarity">
    <text evidence="1">Belongs to the universal ribosomal protein uS7 family.</text>
</comment>
<proteinExistence type="inferred from homology"/>
<sequence>MPRRREVPKRNILPDPKFHDKTVAKLINVLMLAGKKSIAESILYGALDIVAQKTNDEAVKVLKKSLDNIKPALEVKSRRVGGSTYQVPIEVRPDRRVSLAMRWLIKYSTLRSEKTMKDKLAGEILDAYNSRGAAVKKREDVHKMAEANRAFAHYRW</sequence>
<keyword id="KW-1185">Reference proteome</keyword>
<keyword id="KW-0687">Ribonucleoprotein</keyword>
<keyword id="KW-0689">Ribosomal protein</keyword>
<keyword id="KW-0694">RNA-binding</keyword>
<keyword id="KW-0699">rRNA-binding</keyword>
<keyword id="KW-0820">tRNA-binding</keyword>
<feature type="chain" id="PRO_1000014251" description="Small ribosomal subunit protein uS7">
    <location>
        <begin position="1"/>
        <end position="156"/>
    </location>
</feature>
<evidence type="ECO:0000255" key="1">
    <source>
        <dbReference type="HAMAP-Rule" id="MF_00480"/>
    </source>
</evidence>
<evidence type="ECO:0000305" key="2"/>
<name>RS7_PELPD</name>
<accession>A1ALT7</accession>